<keyword id="KW-0150">Chloroplast</keyword>
<keyword id="KW-0934">Plastid</keyword>
<keyword id="KW-0687">Ribonucleoprotein</keyword>
<keyword id="KW-0689">Ribosomal protein</keyword>
<keyword id="KW-0694">RNA-binding</keyword>
<keyword id="KW-0699">rRNA-binding</keyword>
<protein>
    <recommendedName>
        <fullName evidence="1">Small ribosomal subunit protein uS19c</fullName>
    </recommendedName>
    <alternativeName>
        <fullName evidence="2">30S ribosomal protein S19, chloroplastic</fullName>
    </alternativeName>
</protein>
<reference key="1">
    <citation type="journal article" date="2002" name="DNA Res.">
        <title>Evolutionary re-organisation of a large operon in adzuki bean chloroplast DNA caused by inverted repeat movement.</title>
        <authorList>
            <person name="Perry A.S."/>
            <person name="Brennan S."/>
            <person name="Murphy D.J."/>
            <person name="Kavanagh T.A."/>
            <person name="Wolfe K.H."/>
        </authorList>
    </citation>
    <scope>NUCLEOTIDE SEQUENCE [GENOMIC DNA]</scope>
    <source>
        <strain>cv. Erimo-shozu</strain>
    </source>
</reference>
<sequence length="92" mass="10582">MTRSLKKNPFVANHLLRKINKLNTKAEKDIILTWSRASTIIPTMIGHTIAIHNGKEHLPIYITDRMVGHKLGEFSPTLNFRGHAKNDNRSRR</sequence>
<dbReference type="EMBL" id="AF536225">
    <property type="protein sequence ID" value="AAN04887.1"/>
    <property type="molecule type" value="Genomic_DNA"/>
</dbReference>
<dbReference type="EMBL" id="AF536226">
    <property type="protein sequence ID" value="AAN04894.1"/>
    <property type="molecule type" value="Genomic_DNA"/>
</dbReference>
<dbReference type="RefSeq" id="YP_007889760.1">
    <property type="nucleotide sequence ID" value="NC_021091.1"/>
</dbReference>
<dbReference type="RefSeq" id="YP_007889782.1">
    <property type="nucleotide sequence ID" value="NC_021091.1"/>
</dbReference>
<dbReference type="SMR" id="Q8LUX2"/>
<dbReference type="GeneID" id="15382677"/>
<dbReference type="GeneID" id="15382699"/>
<dbReference type="KEGG" id="var:15382677"/>
<dbReference type="KEGG" id="var:15382699"/>
<dbReference type="OrthoDB" id="2043at2759"/>
<dbReference type="GO" id="GO:0009507">
    <property type="term" value="C:chloroplast"/>
    <property type="evidence" value="ECO:0007669"/>
    <property type="project" value="UniProtKB-SubCell"/>
</dbReference>
<dbReference type="GO" id="GO:0005763">
    <property type="term" value="C:mitochondrial small ribosomal subunit"/>
    <property type="evidence" value="ECO:0007669"/>
    <property type="project" value="TreeGrafter"/>
</dbReference>
<dbReference type="GO" id="GO:0019843">
    <property type="term" value="F:rRNA binding"/>
    <property type="evidence" value="ECO:0007669"/>
    <property type="project" value="UniProtKB-UniRule"/>
</dbReference>
<dbReference type="GO" id="GO:0003735">
    <property type="term" value="F:structural constituent of ribosome"/>
    <property type="evidence" value="ECO:0007669"/>
    <property type="project" value="InterPro"/>
</dbReference>
<dbReference type="GO" id="GO:0000028">
    <property type="term" value="P:ribosomal small subunit assembly"/>
    <property type="evidence" value="ECO:0007669"/>
    <property type="project" value="TreeGrafter"/>
</dbReference>
<dbReference type="GO" id="GO:0006412">
    <property type="term" value="P:translation"/>
    <property type="evidence" value="ECO:0007669"/>
    <property type="project" value="UniProtKB-UniRule"/>
</dbReference>
<dbReference type="FunFam" id="3.30.860.10:FF:000001">
    <property type="entry name" value="30S ribosomal protein S19"/>
    <property type="match status" value="1"/>
</dbReference>
<dbReference type="Gene3D" id="3.30.860.10">
    <property type="entry name" value="30s Ribosomal Protein S19, Chain A"/>
    <property type="match status" value="1"/>
</dbReference>
<dbReference type="HAMAP" id="MF_00531">
    <property type="entry name" value="Ribosomal_uS19"/>
    <property type="match status" value="1"/>
</dbReference>
<dbReference type="InterPro" id="IPR002222">
    <property type="entry name" value="Ribosomal_uS19"/>
</dbReference>
<dbReference type="InterPro" id="IPR005732">
    <property type="entry name" value="Ribosomal_uS19_bac-type"/>
</dbReference>
<dbReference type="InterPro" id="IPR020934">
    <property type="entry name" value="Ribosomal_uS19_CS"/>
</dbReference>
<dbReference type="InterPro" id="IPR023575">
    <property type="entry name" value="Ribosomal_uS19_SF"/>
</dbReference>
<dbReference type="NCBIfam" id="TIGR01050">
    <property type="entry name" value="rpsS_bact"/>
    <property type="match status" value="1"/>
</dbReference>
<dbReference type="PANTHER" id="PTHR11880">
    <property type="entry name" value="RIBOSOMAL PROTEIN S19P FAMILY MEMBER"/>
    <property type="match status" value="1"/>
</dbReference>
<dbReference type="PANTHER" id="PTHR11880:SF8">
    <property type="entry name" value="SMALL RIBOSOMAL SUBUNIT PROTEIN US19M"/>
    <property type="match status" value="1"/>
</dbReference>
<dbReference type="Pfam" id="PF00203">
    <property type="entry name" value="Ribosomal_S19"/>
    <property type="match status" value="1"/>
</dbReference>
<dbReference type="PIRSF" id="PIRSF002144">
    <property type="entry name" value="Ribosomal_S19"/>
    <property type="match status" value="1"/>
</dbReference>
<dbReference type="PRINTS" id="PR00975">
    <property type="entry name" value="RIBOSOMALS19"/>
</dbReference>
<dbReference type="SUPFAM" id="SSF54570">
    <property type="entry name" value="Ribosomal protein S19"/>
    <property type="match status" value="1"/>
</dbReference>
<dbReference type="PROSITE" id="PS00323">
    <property type="entry name" value="RIBOSOMAL_S19"/>
    <property type="match status" value="1"/>
</dbReference>
<feature type="chain" id="PRO_0000129981" description="Small ribosomal subunit protein uS19c">
    <location>
        <begin position="1"/>
        <end position="92"/>
    </location>
</feature>
<evidence type="ECO:0000255" key="1">
    <source>
        <dbReference type="HAMAP-Rule" id="MF_00531"/>
    </source>
</evidence>
<evidence type="ECO:0000305" key="2"/>
<geneLocation type="chloroplast"/>
<comment type="function">
    <text evidence="1">Protein S19 forms a complex with S13 that binds strongly to the 16S ribosomal RNA.</text>
</comment>
<comment type="subcellular location">
    <subcellularLocation>
        <location>Plastid</location>
        <location>Chloroplast</location>
    </subcellularLocation>
</comment>
<comment type="similarity">
    <text evidence="1">Belongs to the universal ribosomal protein uS19 family.</text>
</comment>
<organism>
    <name type="scientific">Phaseolus angularis</name>
    <name type="common">Azuki bean</name>
    <name type="synonym">Vigna angularis</name>
    <dbReference type="NCBI Taxonomy" id="3914"/>
    <lineage>
        <taxon>Eukaryota</taxon>
        <taxon>Viridiplantae</taxon>
        <taxon>Streptophyta</taxon>
        <taxon>Embryophyta</taxon>
        <taxon>Tracheophyta</taxon>
        <taxon>Spermatophyta</taxon>
        <taxon>Magnoliopsida</taxon>
        <taxon>eudicotyledons</taxon>
        <taxon>Gunneridae</taxon>
        <taxon>Pentapetalae</taxon>
        <taxon>rosids</taxon>
        <taxon>fabids</taxon>
        <taxon>Fabales</taxon>
        <taxon>Fabaceae</taxon>
        <taxon>Papilionoideae</taxon>
        <taxon>50 kb inversion clade</taxon>
        <taxon>NPAAA clade</taxon>
        <taxon>indigoferoid/millettioid clade</taxon>
        <taxon>Phaseoleae</taxon>
        <taxon>Vigna</taxon>
    </lineage>
</organism>
<gene>
    <name evidence="1" type="primary">rps19</name>
</gene>
<name>RR19_PHAAN</name>
<accession>Q8LUX2</accession>
<proteinExistence type="inferred from homology"/>